<reference key="1">
    <citation type="submission" date="2008-05" db="EMBL/GenBank/DDBJ databases">
        <title>Complete sequence of Shigella boydii serotype 18 strain BS512.</title>
        <authorList>
            <person name="Rasko D.A."/>
            <person name="Rosovitz M."/>
            <person name="Maurelli A.T."/>
            <person name="Myers G."/>
            <person name="Seshadri R."/>
            <person name="Cer R."/>
            <person name="Jiang L."/>
            <person name="Ravel J."/>
            <person name="Sebastian Y."/>
        </authorList>
    </citation>
    <scope>NUCLEOTIDE SEQUENCE [LARGE SCALE GENOMIC DNA]</scope>
    <source>
        <strain>CDC 3083-94 / BS512</strain>
    </source>
</reference>
<keyword id="KW-0067">ATP-binding</keyword>
<keyword id="KW-0131">Cell cycle</keyword>
<keyword id="KW-0132">Cell division</keyword>
<keyword id="KW-0159">Chromosome partition</keyword>
<keyword id="KW-0175">Coiled coil</keyword>
<keyword id="KW-0963">Cytoplasm</keyword>
<keyword id="KW-0226">DNA condensation</keyword>
<keyword id="KW-0238">DNA-binding</keyword>
<keyword id="KW-0547">Nucleotide-binding</keyword>
<keyword id="KW-1185">Reference proteome</keyword>
<name>MUKB_SHIB3</name>
<protein>
    <recommendedName>
        <fullName evidence="1">Chromosome partition protein MukB</fullName>
    </recommendedName>
    <alternativeName>
        <fullName evidence="1">Structural maintenance of chromosome-related protein</fullName>
    </alternativeName>
</protein>
<organism>
    <name type="scientific">Shigella boydii serotype 18 (strain CDC 3083-94 / BS512)</name>
    <dbReference type="NCBI Taxonomy" id="344609"/>
    <lineage>
        <taxon>Bacteria</taxon>
        <taxon>Pseudomonadati</taxon>
        <taxon>Pseudomonadota</taxon>
        <taxon>Gammaproteobacteria</taxon>
        <taxon>Enterobacterales</taxon>
        <taxon>Enterobacteriaceae</taxon>
        <taxon>Shigella</taxon>
    </lineage>
</organism>
<dbReference type="EMBL" id="CP001063">
    <property type="protein sequence ID" value="ACD08954.1"/>
    <property type="molecule type" value="Genomic_DNA"/>
</dbReference>
<dbReference type="RefSeq" id="WP_000572659.1">
    <property type="nucleotide sequence ID" value="NC_010658.1"/>
</dbReference>
<dbReference type="SMR" id="B2TUF5"/>
<dbReference type="STRING" id="344609.SbBS512_E2400"/>
<dbReference type="KEGG" id="sbc:SbBS512_E2400"/>
<dbReference type="HOGENOM" id="CLU_004430_0_0_6"/>
<dbReference type="Proteomes" id="UP000001030">
    <property type="component" value="Chromosome"/>
</dbReference>
<dbReference type="GO" id="GO:0005737">
    <property type="term" value="C:cytoplasm"/>
    <property type="evidence" value="ECO:0007669"/>
    <property type="project" value="UniProtKB-UniRule"/>
</dbReference>
<dbReference type="GO" id="GO:0009295">
    <property type="term" value="C:nucleoid"/>
    <property type="evidence" value="ECO:0007669"/>
    <property type="project" value="UniProtKB-SubCell"/>
</dbReference>
<dbReference type="GO" id="GO:0005524">
    <property type="term" value="F:ATP binding"/>
    <property type="evidence" value="ECO:0007669"/>
    <property type="project" value="UniProtKB-UniRule"/>
</dbReference>
<dbReference type="GO" id="GO:0003677">
    <property type="term" value="F:DNA binding"/>
    <property type="evidence" value="ECO:0007669"/>
    <property type="project" value="UniProtKB-UniRule"/>
</dbReference>
<dbReference type="GO" id="GO:0051301">
    <property type="term" value="P:cell division"/>
    <property type="evidence" value="ECO:0007669"/>
    <property type="project" value="UniProtKB-KW"/>
</dbReference>
<dbReference type="GO" id="GO:0030261">
    <property type="term" value="P:chromosome condensation"/>
    <property type="evidence" value="ECO:0007669"/>
    <property type="project" value="UniProtKB-KW"/>
</dbReference>
<dbReference type="GO" id="GO:0007059">
    <property type="term" value="P:chromosome segregation"/>
    <property type="evidence" value="ECO:0007669"/>
    <property type="project" value="UniProtKB-UniRule"/>
</dbReference>
<dbReference type="GO" id="GO:0006260">
    <property type="term" value="P:DNA replication"/>
    <property type="evidence" value="ECO:0007669"/>
    <property type="project" value="UniProtKB-UniRule"/>
</dbReference>
<dbReference type="FunFam" id="1.20.58.850:FF:000001">
    <property type="entry name" value="Chromosome partition protein MukB"/>
    <property type="match status" value="1"/>
</dbReference>
<dbReference type="FunFam" id="3.30.70.3500:FF:000001">
    <property type="entry name" value="Chromosome partition protein MukB"/>
    <property type="match status" value="1"/>
</dbReference>
<dbReference type="FunFam" id="3.40.1140.10:FF:000001">
    <property type="entry name" value="Chromosome partition protein MukB"/>
    <property type="match status" value="1"/>
</dbReference>
<dbReference type="FunFam" id="3.40.1140.10:FF:000002">
    <property type="entry name" value="Chromosome partition protein MukB"/>
    <property type="match status" value="1"/>
</dbReference>
<dbReference type="Gene3D" id="1.20.58.850">
    <property type="match status" value="1"/>
</dbReference>
<dbReference type="Gene3D" id="3.40.1140.10">
    <property type="match status" value="2"/>
</dbReference>
<dbReference type="Gene3D" id="1.20.5.420">
    <property type="entry name" value="Immunoglobulin FC, subunit C"/>
    <property type="match status" value="1"/>
</dbReference>
<dbReference type="Gene3D" id="3.30.70.3500">
    <property type="entry name" value="MukB, hinge domain"/>
    <property type="match status" value="1"/>
</dbReference>
<dbReference type="HAMAP" id="MF_01800">
    <property type="entry name" value="MukB"/>
    <property type="match status" value="1"/>
</dbReference>
<dbReference type="InterPro" id="IPR012090">
    <property type="entry name" value="MukB"/>
</dbReference>
<dbReference type="InterPro" id="IPR050308">
    <property type="entry name" value="MukB/SMC"/>
</dbReference>
<dbReference type="InterPro" id="IPR032520">
    <property type="entry name" value="MukB_hinge"/>
</dbReference>
<dbReference type="InterPro" id="IPR042501">
    <property type="entry name" value="MukB_hinge_sf"/>
</dbReference>
<dbReference type="InterPro" id="IPR007406">
    <property type="entry name" value="MukB_N_dom"/>
</dbReference>
<dbReference type="InterPro" id="IPR027417">
    <property type="entry name" value="P-loop_NTPase"/>
</dbReference>
<dbReference type="NCBIfam" id="NF003422">
    <property type="entry name" value="PRK04863.1"/>
    <property type="match status" value="1"/>
</dbReference>
<dbReference type="PANTHER" id="PTHR42963">
    <property type="entry name" value="CHROMOSOME PARTITION PROTEIN MUKB"/>
    <property type="match status" value="1"/>
</dbReference>
<dbReference type="PANTHER" id="PTHR42963:SF1">
    <property type="entry name" value="DUF4476 DOMAIN-CONTAINING PROTEIN"/>
    <property type="match status" value="1"/>
</dbReference>
<dbReference type="Pfam" id="PF04310">
    <property type="entry name" value="MukB"/>
    <property type="match status" value="1"/>
</dbReference>
<dbReference type="Pfam" id="PF16330">
    <property type="entry name" value="MukB_hinge"/>
    <property type="match status" value="1"/>
</dbReference>
<dbReference type="Pfam" id="PF13558">
    <property type="entry name" value="SbcC_Walker_B"/>
    <property type="match status" value="1"/>
</dbReference>
<dbReference type="PIRSF" id="PIRSF005246">
    <property type="entry name" value="MukB"/>
    <property type="match status" value="1"/>
</dbReference>
<dbReference type="SUPFAM" id="SSF52540">
    <property type="entry name" value="P-loop containing nucleoside triphosphate hydrolases"/>
    <property type="match status" value="2"/>
</dbReference>
<feature type="chain" id="PRO_1000187490" description="Chromosome partition protein MukB">
    <location>
        <begin position="1"/>
        <end position="1486"/>
    </location>
</feature>
<feature type="region of interest" description="Flexible hinge" evidence="1">
    <location>
        <begin position="666"/>
        <end position="783"/>
    </location>
</feature>
<feature type="coiled-coil region" evidence="1">
    <location>
        <begin position="326"/>
        <end position="418"/>
    </location>
</feature>
<feature type="coiled-coil region" evidence="1">
    <location>
        <begin position="444"/>
        <end position="480"/>
    </location>
</feature>
<feature type="coiled-coil region" evidence="1">
    <location>
        <begin position="509"/>
        <end position="603"/>
    </location>
</feature>
<feature type="coiled-coil region" evidence="1">
    <location>
        <begin position="835"/>
        <end position="923"/>
    </location>
</feature>
<feature type="coiled-coil region" evidence="1">
    <location>
        <begin position="977"/>
        <end position="1115"/>
    </location>
</feature>
<feature type="coiled-coil region" evidence="1">
    <location>
        <begin position="1209"/>
        <end position="1266"/>
    </location>
</feature>
<feature type="binding site" evidence="1">
    <location>
        <begin position="34"/>
        <end position="41"/>
    </location>
    <ligand>
        <name>ATP</name>
        <dbReference type="ChEBI" id="CHEBI:30616"/>
    </ligand>
</feature>
<evidence type="ECO:0000255" key="1">
    <source>
        <dbReference type="HAMAP-Rule" id="MF_01800"/>
    </source>
</evidence>
<sequence>MIERGKFRSLTLINWNGFFARTFDLDELVTTLSGGNGAGKSTTMAAFVTALIPDLTLLHFRNTTEAGATSGSRDKGLHGKLKAGVCYSMLDTINSRHQRVVVGVRLQQVAGRDRKVDIKPFAIQGLPMSVQPTQLVTETLNERQARVLPLNELKDKLEAMEGVQFKQFNSITDYHSLMFDLGIIARRLRSASDRSKFYRLIEASLYGGISSAITRSLRDYLLPENSGVRKAFQDMEAALRENRMTLEAIRVTQSDRDLFKHLISEATNYVAADYMRHANERRVHLDKALEFRRELHTSRQQLAAEQYKHVDMARELAEHNGAEGDLEADYQAASDHLNLVQTALRQQEKIERYEADLDELQIRLEEQNEVVAEAIERQEENEARAEAAELEVDELKSQLADYQQALDVQQTRAIQYNQAIAALNRAKELCHLPDLTADSAAEWLETFQAKELEATEKMLSLEQKMSMAQTAHSQFEQAYQLVVAINGPLARNEAWDVARELLREGVDQRHLAEQVQPLRMRLSELEQRLREQQEAERLLADFCKRQGKNFDIDELEALHQELEARIASLSDSVSNAREERMALRQEQEQLQSRIQSLMQRAPVWLAAQNSLNQLSEQCGEEFTSSQDVTEYLQQLLEREREAIVERDEVGARKNAVDEEIERLSQPGGSEDQRLNALAERFGGVLLSEIYDDVSLEDAPYFSALYGPSRHAIVVPDLSQVTEHLDGLTDCPEDLYLIEGDPQSFDDSVFSVDELEKAVVVKIADRQWRYSRFPEVPLFGRAARESRIESLHAEREVLSERFATLSFDVQKTQRLHQAFSRFIGSHLAVVFESDPEAEIRQLNSRRVELERALSNHENDNQQQRIQFEQAKEGVTALNRILPRLNLLADDSLADRVDEIRERLDEAQEAARFVQQFGNQLAKLEPIVSVLQSDPEQFEQLKEDYAYSQQMQRDARQQAFALTEVVQRRAHFSYSDSAEMLSGNSDLNEKLRERLEQAEAERTRAREALRGHAAQLSQYNQVLASLKSSYDTKKELLNDLQRELQDIGVRADSGAEERARIRRDELHAQLSNNRSRRNQLEKALTFCEAEMDNLTRKLRKLERDYFEMREQVVTAKAGWCAVMRMVKDNGVERRLHRRELAYLSADDLRSMSDKALGALRLAVADNEHLRDVLRMSEDPKRPERKIQFFVAAYQHLRERIRQDIIRTDDPVEAIEQMEIELSRLTEELTSREQKLVISSRSVANIIRKTIQREQNRIRMLNQGLQNVSFGQVNSVRLNVNVRETHAMLLDVLSEQHEQHQDLFNSNRLTFSEALAKLYQRLNPQIDMGQRTPQTIGEELLDYRNYLEMEVEVNRGSDGWLRAESGALSTGEAIGTGMSILVMVVQSWEDESRRLRGKDISPCRLLFLDEAARLDARSIATLFELCERLQMQLIIAAPENISPEKGTTYKLVRKVFQNTEHVHVVGLRGFAPQLPETLPGTDEAPSQAS</sequence>
<accession>B2TUF5</accession>
<comment type="function">
    <text evidence="1">Plays a central role in chromosome condensation, segregation and cell cycle progression. Functions as a homodimer, which is essential for chromosome partition. Involved in negative DNA supercoiling in vivo, and by this means organize and compact chromosomes. May achieve or facilitate chromosome segregation by condensation DNA from both sides of a centrally located replisome during cell division.</text>
</comment>
<comment type="subunit">
    <text evidence="1">Homodimerization via its hinge domain. Binds to DNA via its C-terminal region. Interacts, and probably forms a ternary complex, with MukE and MukF via its C-terminal region. The complex formation is stimulated by calcium or magnesium. Interacts with tubulin-related protein FtsZ.</text>
</comment>
<comment type="subcellular location">
    <subcellularLocation>
        <location evidence="1">Cytoplasm</location>
        <location evidence="1">Nucleoid</location>
    </subcellularLocation>
    <text evidence="1">Restricted to the nucleoid region.</text>
</comment>
<comment type="domain">
    <text evidence="1">The hinge domain, which separates the large intramolecular coiled coil regions, allows the homodimerization, forming a V-shaped homodimer.</text>
</comment>
<comment type="similarity">
    <text evidence="1">Belongs to the SMC family. MukB subfamily.</text>
</comment>
<proteinExistence type="inferred from homology"/>
<gene>
    <name evidence="1" type="primary">mukB</name>
    <name type="ordered locus">SbBS512_E2400</name>
</gene>